<proteinExistence type="predicted"/>
<dbReference type="EC" id="2.1.1.-"/>
<dbReference type="EMBL" id="AJ235272">
    <property type="protein sequence ID" value="CAA14994.1"/>
    <property type="molecule type" value="Genomic_DNA"/>
</dbReference>
<dbReference type="PIR" id="H71658">
    <property type="entry name" value="H71658"/>
</dbReference>
<dbReference type="RefSeq" id="NP_220918.1">
    <property type="nucleotide sequence ID" value="NC_000963.1"/>
</dbReference>
<dbReference type="RefSeq" id="WP_004597837.1">
    <property type="nucleotide sequence ID" value="NC_000963.1"/>
</dbReference>
<dbReference type="SMR" id="Q9ZD05"/>
<dbReference type="STRING" id="272947.gene:17555625"/>
<dbReference type="EnsemblBacteria" id="CAA14994">
    <property type="protein sequence ID" value="CAA14994"/>
    <property type="gene ID" value="CAA14994"/>
</dbReference>
<dbReference type="KEGG" id="rpr:RP545"/>
<dbReference type="PATRIC" id="fig|272947.5.peg.556"/>
<dbReference type="eggNOG" id="COG0742">
    <property type="taxonomic scope" value="Bacteria"/>
</dbReference>
<dbReference type="HOGENOM" id="CLU_075826_1_1_5"/>
<dbReference type="OrthoDB" id="9803017at2"/>
<dbReference type="Proteomes" id="UP000002480">
    <property type="component" value="Chromosome"/>
</dbReference>
<dbReference type="GO" id="GO:0008168">
    <property type="term" value="F:methyltransferase activity"/>
    <property type="evidence" value="ECO:0007669"/>
    <property type="project" value="UniProtKB-KW"/>
</dbReference>
<dbReference type="GO" id="GO:0003676">
    <property type="term" value="F:nucleic acid binding"/>
    <property type="evidence" value="ECO:0007669"/>
    <property type="project" value="InterPro"/>
</dbReference>
<dbReference type="GO" id="GO:0031167">
    <property type="term" value="P:rRNA methylation"/>
    <property type="evidence" value="ECO:0007669"/>
    <property type="project" value="InterPro"/>
</dbReference>
<dbReference type="CDD" id="cd02440">
    <property type="entry name" value="AdoMet_MTases"/>
    <property type="match status" value="1"/>
</dbReference>
<dbReference type="Gene3D" id="3.40.50.150">
    <property type="entry name" value="Vaccinia Virus protein VP39"/>
    <property type="match status" value="1"/>
</dbReference>
<dbReference type="InterPro" id="IPR002052">
    <property type="entry name" value="DNA_methylase_N6_adenine_CS"/>
</dbReference>
<dbReference type="InterPro" id="IPR004398">
    <property type="entry name" value="RNA_MeTrfase_RsmD"/>
</dbReference>
<dbReference type="InterPro" id="IPR005728">
    <property type="entry name" value="RPE1"/>
</dbReference>
<dbReference type="InterPro" id="IPR029063">
    <property type="entry name" value="SAM-dependent_MTases_sf"/>
</dbReference>
<dbReference type="NCBIfam" id="TIGR01045">
    <property type="entry name" value="RPE1"/>
    <property type="match status" value="1"/>
</dbReference>
<dbReference type="PANTHER" id="PTHR43542">
    <property type="entry name" value="METHYLTRANSFERASE"/>
    <property type="match status" value="1"/>
</dbReference>
<dbReference type="PANTHER" id="PTHR43542:SF1">
    <property type="entry name" value="METHYLTRANSFERASE"/>
    <property type="match status" value="1"/>
</dbReference>
<dbReference type="Pfam" id="PF03602">
    <property type="entry name" value="Cons_hypoth95"/>
    <property type="match status" value="2"/>
</dbReference>
<dbReference type="PIRSF" id="PIRSF004553">
    <property type="entry name" value="CHP00095"/>
    <property type="match status" value="1"/>
</dbReference>
<dbReference type="SUPFAM" id="SSF53335">
    <property type="entry name" value="S-adenosyl-L-methionine-dependent methyltransferases"/>
    <property type="match status" value="1"/>
</dbReference>
<dbReference type="PROSITE" id="PS00092">
    <property type="entry name" value="N6_MTASE"/>
    <property type="match status" value="1"/>
</dbReference>
<gene>
    <name type="ordered locus">RP545</name>
</gene>
<feature type="chain" id="PRO_0000101390" description="Uncharacterized methylase RP545">
    <location>
        <begin position="1"/>
        <end position="236"/>
    </location>
</feature>
<feature type="domain" description="RPE1 insert">
    <location>
        <begin position="117"/>
        <end position="160"/>
    </location>
</feature>
<sequence length="236" mass="26771">MLKIISGKYKNQIIPTAQNIKYRPSTGKLKEAIFSILTSGEFIGNKLFNENTQILDLFAGSGSLAFESLSRGAGFATLIDIDTYSLKIAAGFAKSLNIENNVHFININALNLQKTTRYLSKQTDRNEFITTAESYIGISKHKSTNITYKLPLKEQFCNMSNKVFDLVFIDPPYNKDIVPKVMKLLIKNNWLKNGTIIVIEMSKTDDYDLDKNIEIIRAKLYGQSKLLVLRYSSHLR</sequence>
<organism>
    <name type="scientific">Rickettsia prowazekii (strain Madrid E)</name>
    <dbReference type="NCBI Taxonomy" id="272947"/>
    <lineage>
        <taxon>Bacteria</taxon>
        <taxon>Pseudomonadati</taxon>
        <taxon>Pseudomonadota</taxon>
        <taxon>Alphaproteobacteria</taxon>
        <taxon>Rickettsiales</taxon>
        <taxon>Rickettsiaceae</taxon>
        <taxon>Rickettsieae</taxon>
        <taxon>Rickettsia</taxon>
        <taxon>typhus group</taxon>
    </lineage>
</organism>
<protein>
    <recommendedName>
        <fullName>Uncharacterized methylase RP545</fullName>
        <ecNumber>2.1.1.-</ecNumber>
    </recommendedName>
</protein>
<accession>Q9ZD05</accession>
<keyword id="KW-0489">Methyltransferase</keyword>
<keyword id="KW-1185">Reference proteome</keyword>
<keyword id="KW-0808">Transferase</keyword>
<reference key="1">
    <citation type="journal article" date="1998" name="Nature">
        <title>The genome sequence of Rickettsia prowazekii and the origin of mitochondria.</title>
        <authorList>
            <person name="Andersson S.G.E."/>
            <person name="Zomorodipour A."/>
            <person name="Andersson J.O."/>
            <person name="Sicheritz-Ponten T."/>
            <person name="Alsmark U.C.M."/>
            <person name="Podowski R.M."/>
            <person name="Naeslund A.K."/>
            <person name="Eriksson A.-S."/>
            <person name="Winkler H.H."/>
            <person name="Kurland C.G."/>
        </authorList>
    </citation>
    <scope>NUCLEOTIDE SEQUENCE [LARGE SCALE GENOMIC DNA]</scope>
    <source>
        <strain>Madrid E</strain>
    </source>
</reference>
<reference key="2">
    <citation type="journal article" date="2000" name="Science">
        <title>Selfish DNA in protein-coding genes of Rickettsia.</title>
        <authorList>
            <person name="Ogata H."/>
            <person name="Audic S."/>
            <person name="Barbe V."/>
            <person name="Artiguenave F."/>
            <person name="Fournier P.-E."/>
            <person name="Raoult D."/>
            <person name="Claverie J.-M."/>
        </authorList>
    </citation>
    <scope>DOMAIN RPE1</scope>
</reference>
<name>Y545_RICPR</name>